<name>CNGB1_RAT</name>
<protein>
    <recommendedName>
        <fullName>Cyclic nucleotide-gated channel beta-1</fullName>
    </recommendedName>
    <alternativeName>
        <fullName>Cyclic nucleotide-gated cation channel 4</fullName>
        <shortName>CNG channel 4</shortName>
        <shortName>CNG-4</shortName>
        <shortName evidence="13">CNG4</shortName>
    </alternativeName>
</protein>
<keyword id="KW-0024">Alternative initiation</keyword>
<keyword id="KW-0025">Alternative splicing</keyword>
<keyword id="KW-0106">Calcium</keyword>
<keyword id="KW-0107">Calcium channel</keyword>
<keyword id="KW-0109">Calcium transport</keyword>
<keyword id="KW-0114">cAMP</keyword>
<keyword id="KW-0116">cAMP-binding</keyword>
<keyword id="KW-1003">Cell membrane</keyword>
<keyword id="KW-0966">Cell projection</keyword>
<keyword id="KW-0140">cGMP</keyword>
<keyword id="KW-0142">cGMP-binding</keyword>
<keyword id="KW-0407">Ion channel</keyword>
<keyword id="KW-0406">Ion transport</keyword>
<keyword id="KW-1071">Ligand-gated ion channel</keyword>
<keyword id="KW-0472">Membrane</keyword>
<keyword id="KW-0547">Nucleotide-binding</keyword>
<keyword id="KW-0552">Olfaction</keyword>
<keyword id="KW-1185">Reference proteome</keyword>
<keyword id="KW-0716">Sensory transduction</keyword>
<keyword id="KW-0915">Sodium</keyword>
<keyword id="KW-0894">Sodium channel</keyword>
<keyword id="KW-0739">Sodium transport</keyword>
<keyword id="KW-0812">Transmembrane</keyword>
<keyword id="KW-1133">Transmembrane helix</keyword>
<keyword id="KW-0813">Transport</keyword>
<keyword id="KW-0844">Vision</keyword>
<gene>
    <name evidence="13 16" type="primary">Cngb1</name>
    <name type="synonym">CNCG2</name>
    <name type="synonym">CNCG3L</name>
    <name type="synonym">CNCG4</name>
    <name evidence="13" type="synonym">RCNC2</name>
</gene>
<sequence>MLGWVQRVLPQPPGTPQKTEEGAGPQPETESKPEANPQPEPEVQPEPEPEPEPAPEEAAPEVQTLPPEEPVEGEDVAEAGPSLQETQEADPPQPTSQAQVAVVKVNRPSSWMLSWFWKGMEKVVPQPVYSSSGGQNLAAGEGGPDQDGAQTLEPCGTGDPGSEDGSDKTSKTQDTEPSLWLLRWLELNLEKVLPQPPTPSQAWKVEPEGAVLEPDPPGTPMEVEPTENPSQPNPGPVEPEEEPAAEPQPGFQASSLPPPGDPVRLIEWLLHRLEMALPQPVLHGKAAEQEPSCPGTCDVQTISILPVEQAEHDLVLEDVDSCWEDTQQEDGASLQETELAPIYEDESEAMVEMPRELPQIQEEEEEEKEEKEEKEEEEEKEEEEKREEEKKKEKEEEKKEKEKEEKEEKEEKEEEEKEEKEEEEKEEKEEEEKEEKEEEEEEEEEEEEEEPIVLLDSCLVVQADVDQCQLERAQPETASIQELPEEEEEKEEEKKEEEEEKEEEEEKEEEEEKEEEGEATNSTVPATKEHPELQVEDTDAEAGPLIPEETIPPPERPPVSPAKSDTLAVPGAATHRKKLPSQDDEAEELKALSPAESPVVAWSDPTTPQEADGEDRAASTASQNSAIINDRLQELVKMFKERTEKVKEKLIDPDVTSDEESPKPSPAKKAPDSAPAQKPAEAEAAEEEHYCDMLCCKFKRRPWKMYQFPQSIDPLTNLMYILWLFFVVLAWNWNCWLIPVRWAFPYQRADNIHLWLLMDYLCDFIYLLDITVFQMRLQFVKGGDIITDKKEMRNNYLKSQRFKMDLLCLLPLDFLYLKLGVNPLLRLPRCLKYMAFFEFNNRLEAILSKAYVYRVIRTTAYLLYSLHLNSCLYYWASAFQGIGSTHWVYDGVGNSYIRCYYWAVKTLITIGGLPDPQTLFEIVFQLLNYFTGVFAFSVMIGQMRDVVGAATAGQTYYRSCMDSTVKYMNFYKIPRSVQNRVKTWYEYTWHSQGMLDESELMVQLPDKMRLDLAIDVNYNIVSKVALFQGCDRQMIFDMLKRLRSVVYLPNDYVCKKGEIGREMYIIQAGQVQVLGGPDGKAVLVTLKAGSVFGEISLLAVGGGNRRTANVVAHGFTNLFILDKKDLNEILVHYPESQKLLRKKARRMLRNNNKPKEEKSVLILPPRAGTPKLFNAALAAAGKMGPRGAKGGKLAHLRARLKELAALEAAARQQQLLEQAKSSQEAGGEEGSGATDQPAPQEPSEPKEPPEPPAPSSPPPASAKPEGSTEEAAGPPEPSVRIRVSPGPDPGEQTLSVEMLEEKKEEVE</sequence>
<evidence type="ECO:0000250" key="1">
    <source>
        <dbReference type="UniProtKB" id="Q14028"/>
    </source>
</evidence>
<evidence type="ECO:0000250" key="2">
    <source>
        <dbReference type="UniProtKB" id="Q28181"/>
    </source>
</evidence>
<evidence type="ECO:0000250" key="3">
    <source>
        <dbReference type="UniProtKB" id="Q9NQW8"/>
    </source>
</evidence>
<evidence type="ECO:0000255" key="4"/>
<evidence type="ECO:0000255" key="5">
    <source>
        <dbReference type="PROSITE-ProRule" id="PRU00060"/>
    </source>
</evidence>
<evidence type="ECO:0000256" key="6">
    <source>
        <dbReference type="SAM" id="MobiDB-lite"/>
    </source>
</evidence>
<evidence type="ECO:0000269" key="7">
    <source>
    </source>
</evidence>
<evidence type="ECO:0000269" key="8">
    <source>
    </source>
</evidence>
<evidence type="ECO:0000269" key="9">
    <source>
    </source>
</evidence>
<evidence type="ECO:0000269" key="10">
    <source>
    </source>
</evidence>
<evidence type="ECO:0000269" key="11">
    <source>
    </source>
</evidence>
<evidence type="ECO:0000303" key="12">
    <source>
    </source>
</evidence>
<evidence type="ECO:0000303" key="13">
    <source>
    </source>
</evidence>
<evidence type="ECO:0000303" key="14">
    <source>
    </source>
</evidence>
<evidence type="ECO:0000305" key="15"/>
<evidence type="ECO:0000312" key="16">
    <source>
        <dbReference type="RGD" id="621809"/>
    </source>
</evidence>
<organism>
    <name type="scientific">Rattus norvegicus</name>
    <name type="common">Rat</name>
    <dbReference type="NCBI Taxonomy" id="10116"/>
    <lineage>
        <taxon>Eukaryota</taxon>
        <taxon>Metazoa</taxon>
        <taxon>Chordata</taxon>
        <taxon>Craniata</taxon>
        <taxon>Vertebrata</taxon>
        <taxon>Euteleostomi</taxon>
        <taxon>Mammalia</taxon>
        <taxon>Eutheria</taxon>
        <taxon>Euarchontoglires</taxon>
        <taxon>Glires</taxon>
        <taxon>Rodentia</taxon>
        <taxon>Myomorpha</taxon>
        <taxon>Muroidea</taxon>
        <taxon>Muridae</taxon>
        <taxon>Murinae</taxon>
        <taxon>Rattus</taxon>
    </lineage>
</organism>
<reference key="1">
    <citation type="journal article" date="1998" name="Proc. Natl. Acad. Sci. U.S.A.">
        <title>An isoform of the rod photoreceptor cyclic nucleotide-gated channel beta subunit expressed in olfactory neurons.</title>
        <authorList>
            <person name="Sautter A."/>
            <person name="Zong X."/>
            <person name="Hofmann F."/>
            <person name="Biel M."/>
        </authorList>
    </citation>
    <scope>NUCLEOTIDE SEQUENCE [MRNA] (ISOFORM 2)</scope>
    <scope>FUNCTION (ISOFORM 2)</scope>
    <scope>TISSUE SPECIFICITY (ISOFORM 2)</scope>
    <source>
        <strain>Sprague-Dawley</strain>
        <tissue>Olfactory epithelium</tissue>
    </source>
</reference>
<reference key="2">
    <citation type="journal article" date="1999" name="J. Neurosci.">
        <title>The native rat olfactory cyclic nucleotide-gated channel is composed of three distinct subunits.</title>
        <authorList>
            <person name="Boenigk W."/>
            <person name="Bradley J."/>
            <person name="Mueller F."/>
            <person name="Sesti F."/>
            <person name="Boekhoff I."/>
            <person name="Ronnett G.V."/>
            <person name="Kaupp U.B."/>
            <person name="Frings S."/>
        </authorList>
    </citation>
    <scope>NUCLEOTIDE SEQUENCE [MRNA] (ISOFORM 2)</scope>
    <scope>FUNCTION (ISOFORM 2)</scope>
    <scope>TRANSPORTER ACTIVITY</scope>
    <scope>SUBCELLULAR LOCATION (ISOFORM 2)</scope>
    <scope>TISSUE SPECIFICITY (ISOFORM 2)</scope>
</reference>
<reference key="3">
    <citation type="journal article" date="2004" name="Nature">
        <title>Genome sequence of the Brown Norway rat yields insights into mammalian evolution.</title>
        <authorList>
            <person name="Gibbs R.A."/>
            <person name="Weinstock G.M."/>
            <person name="Metzker M.L."/>
            <person name="Muzny D.M."/>
            <person name="Sodergren E.J."/>
            <person name="Scherer S."/>
            <person name="Scott G."/>
            <person name="Steffen D."/>
            <person name="Worley K.C."/>
            <person name="Burch P.E."/>
            <person name="Okwuonu G."/>
            <person name="Hines S."/>
            <person name="Lewis L."/>
            <person name="Deramo C."/>
            <person name="Delgado O."/>
            <person name="Dugan-Rocha S."/>
            <person name="Miner G."/>
            <person name="Morgan M."/>
            <person name="Hawes A."/>
            <person name="Gill R."/>
            <person name="Holt R.A."/>
            <person name="Adams M.D."/>
            <person name="Amanatides P.G."/>
            <person name="Baden-Tillson H."/>
            <person name="Barnstead M."/>
            <person name="Chin S."/>
            <person name="Evans C.A."/>
            <person name="Ferriera S."/>
            <person name="Fosler C."/>
            <person name="Glodek A."/>
            <person name="Gu Z."/>
            <person name="Jennings D."/>
            <person name="Kraft C.L."/>
            <person name="Nguyen T."/>
            <person name="Pfannkoch C.M."/>
            <person name="Sitter C."/>
            <person name="Sutton G.G."/>
            <person name="Venter J.C."/>
            <person name="Woodage T."/>
            <person name="Smith D."/>
            <person name="Lee H.-M."/>
            <person name="Gustafson E."/>
            <person name="Cahill P."/>
            <person name="Kana A."/>
            <person name="Doucette-Stamm L."/>
            <person name="Weinstock K."/>
            <person name="Fechtel K."/>
            <person name="Weiss R.B."/>
            <person name="Dunn D.M."/>
            <person name="Green E.D."/>
            <person name="Blakesley R.W."/>
            <person name="Bouffard G.G."/>
            <person name="De Jong P.J."/>
            <person name="Osoegawa K."/>
            <person name="Zhu B."/>
            <person name="Marra M."/>
            <person name="Schein J."/>
            <person name="Bosdet I."/>
            <person name="Fjell C."/>
            <person name="Jones S."/>
            <person name="Krzywinski M."/>
            <person name="Mathewson C."/>
            <person name="Siddiqui A."/>
            <person name="Wye N."/>
            <person name="McPherson J."/>
            <person name="Zhao S."/>
            <person name="Fraser C.M."/>
            <person name="Shetty J."/>
            <person name="Shatsman S."/>
            <person name="Geer K."/>
            <person name="Chen Y."/>
            <person name="Abramzon S."/>
            <person name="Nierman W.C."/>
            <person name="Havlak P.H."/>
            <person name="Chen R."/>
            <person name="Durbin K.J."/>
            <person name="Egan A."/>
            <person name="Ren Y."/>
            <person name="Song X.-Z."/>
            <person name="Li B."/>
            <person name="Liu Y."/>
            <person name="Qin X."/>
            <person name="Cawley S."/>
            <person name="Cooney A.J."/>
            <person name="D'Souza L.M."/>
            <person name="Martin K."/>
            <person name="Wu J.Q."/>
            <person name="Gonzalez-Garay M.L."/>
            <person name="Jackson A.R."/>
            <person name="Kalafus K.J."/>
            <person name="McLeod M.P."/>
            <person name="Milosavljevic A."/>
            <person name="Virk D."/>
            <person name="Volkov A."/>
            <person name="Wheeler D.A."/>
            <person name="Zhang Z."/>
            <person name="Bailey J.A."/>
            <person name="Eichler E.E."/>
            <person name="Tuzun E."/>
            <person name="Birney E."/>
            <person name="Mongin E."/>
            <person name="Ureta-Vidal A."/>
            <person name="Woodwark C."/>
            <person name="Zdobnov E."/>
            <person name="Bork P."/>
            <person name="Suyama M."/>
            <person name="Torrents D."/>
            <person name="Alexandersson M."/>
            <person name="Trask B.J."/>
            <person name="Young J.M."/>
            <person name="Huang H."/>
            <person name="Wang H."/>
            <person name="Xing H."/>
            <person name="Daniels S."/>
            <person name="Gietzen D."/>
            <person name="Schmidt J."/>
            <person name="Stevens K."/>
            <person name="Vitt U."/>
            <person name="Wingrove J."/>
            <person name="Camara F."/>
            <person name="Mar Alba M."/>
            <person name="Abril J.F."/>
            <person name="Guigo R."/>
            <person name="Smit A."/>
            <person name="Dubchak I."/>
            <person name="Rubin E.M."/>
            <person name="Couronne O."/>
            <person name="Poliakov A."/>
            <person name="Huebner N."/>
            <person name="Ganten D."/>
            <person name="Goesele C."/>
            <person name="Hummel O."/>
            <person name="Kreitler T."/>
            <person name="Lee Y.-A."/>
            <person name="Monti J."/>
            <person name="Schulz H."/>
            <person name="Zimdahl H."/>
            <person name="Himmelbauer H."/>
            <person name="Lehrach H."/>
            <person name="Jacob H.J."/>
            <person name="Bromberg S."/>
            <person name="Gullings-Handley J."/>
            <person name="Jensen-Seaman M.I."/>
            <person name="Kwitek A.E."/>
            <person name="Lazar J."/>
            <person name="Pasko D."/>
            <person name="Tonellato P.J."/>
            <person name="Twigger S."/>
            <person name="Ponting C.P."/>
            <person name="Duarte J.M."/>
            <person name="Rice S."/>
            <person name="Goodstadt L."/>
            <person name="Beatson S.A."/>
            <person name="Emes R.D."/>
            <person name="Winter E.E."/>
            <person name="Webber C."/>
            <person name="Brandt P."/>
            <person name="Nyakatura G."/>
            <person name="Adetobi M."/>
            <person name="Chiaromonte F."/>
            <person name="Elnitski L."/>
            <person name="Eswara P."/>
            <person name="Hardison R.C."/>
            <person name="Hou M."/>
            <person name="Kolbe D."/>
            <person name="Makova K."/>
            <person name="Miller W."/>
            <person name="Nekrutenko A."/>
            <person name="Riemer C."/>
            <person name="Schwartz S."/>
            <person name="Taylor J."/>
            <person name="Yang S."/>
            <person name="Zhang Y."/>
            <person name="Lindpaintner K."/>
            <person name="Andrews T.D."/>
            <person name="Caccamo M."/>
            <person name="Clamp M."/>
            <person name="Clarke L."/>
            <person name="Curwen V."/>
            <person name="Durbin R.M."/>
            <person name="Eyras E."/>
            <person name="Searle S.M."/>
            <person name="Cooper G.M."/>
            <person name="Batzoglou S."/>
            <person name="Brudno M."/>
            <person name="Sidow A."/>
            <person name="Stone E.A."/>
            <person name="Payseur B.A."/>
            <person name="Bourque G."/>
            <person name="Lopez-Otin C."/>
            <person name="Puente X.S."/>
            <person name="Chakrabarti K."/>
            <person name="Chatterji S."/>
            <person name="Dewey C."/>
            <person name="Pachter L."/>
            <person name="Bray N."/>
            <person name="Yap V.B."/>
            <person name="Caspi A."/>
            <person name="Tesler G."/>
            <person name="Pevzner P.A."/>
            <person name="Haussler D."/>
            <person name="Roskin K.M."/>
            <person name="Baertsch R."/>
            <person name="Clawson H."/>
            <person name="Furey T.S."/>
            <person name="Hinrichs A.S."/>
            <person name="Karolchik D."/>
            <person name="Kent W.J."/>
            <person name="Rosenbloom K.R."/>
            <person name="Trumbower H."/>
            <person name="Weirauch M."/>
            <person name="Cooper D.N."/>
            <person name="Stenson P.D."/>
            <person name="Ma B."/>
            <person name="Brent M."/>
            <person name="Arumugam M."/>
            <person name="Shteynberg D."/>
            <person name="Copley R.R."/>
            <person name="Taylor M.S."/>
            <person name="Riethman H."/>
            <person name="Mudunuri U."/>
            <person name="Peterson J."/>
            <person name="Guyer M."/>
            <person name="Felsenfeld A."/>
            <person name="Old S."/>
            <person name="Mockrin S."/>
            <person name="Collins F.S."/>
        </authorList>
    </citation>
    <scope>NUCLEOTIDE SEQUENCE [LARGE SCALE GENOMIC DNA] (ISOFORMS 1; 2; 3 AND 4)</scope>
    <source>
        <strain>Brown Norway</strain>
    </source>
</reference>
<reference key="4">
    <citation type="journal article" date="1999" name="EMBO J.">
        <title>Ca2+ permeation in cyclic nucleotide-gated channels.</title>
        <authorList>
            <person name="Dzeja C."/>
            <person name="Hagen V."/>
            <person name="Kaupp U.B."/>
            <person name="Frings S."/>
        </authorList>
    </citation>
    <scope>FUNCTION (ISOFORM 2)</scope>
    <scope>TRANSPORTER ACTIVITY</scope>
</reference>
<reference key="5">
    <citation type="journal article" date="2001" name="Science">
        <title>Nomenclature for ion channel subunits.</title>
        <authorList>
            <person name="Bradley J."/>
            <person name="Frings S."/>
            <person name="Yau K.W."/>
            <person name="Reed R."/>
        </authorList>
    </citation>
    <scope>NOMENCLATURE</scope>
</reference>
<reference key="6">
    <citation type="journal article" date="2004" name="Neuron">
        <title>Stoichiometry and assembly of olfactory cyclic nucleotide-gated channels.</title>
        <authorList>
            <person name="Zheng J."/>
            <person name="Zagotta W.N."/>
        </authorList>
    </citation>
    <scope>FUNCTION (ISOFORM 2)</scope>
    <scope>SUBUNIT (ISOFORM 2)</scope>
</reference>
<reference key="7">
    <citation type="journal article" date="2016" name="Sci. Rep.">
        <title>Deciphering the function of the CNGB1b subunit in olfactory CNG channels.</title>
        <authorList>
            <person name="Nache V."/>
            <person name="Wongsamitkul N."/>
            <person name="Kusch J."/>
            <person name="Zimmer T."/>
            <person name="Schwede F."/>
            <person name="Benndorf K."/>
        </authorList>
    </citation>
    <scope>FUNCTION (ISOFORM 2)</scope>
    <scope>SUBUNIT (ISOFORM 2)</scope>
    <scope>MUTAGENESIS OF ARG-657 (ISOFORM 2)</scope>
</reference>
<accession>A0A8I5ZN27</accession>
<accession>A0A0G2JXF2</accession>
<accession>A0A0G2K685</accession>
<accession>F1LQB8</accession>
<accession>O55157</accession>
<proteinExistence type="evidence at protein level"/>
<feature type="chain" id="PRO_0000460351" description="Cyclic nucleotide-gated channel beta-1">
    <location>
        <begin position="1"/>
        <end position="1307"/>
    </location>
</feature>
<feature type="topological domain" description="Cytoplasmic" evidence="15">
    <location>
        <begin position="1"/>
        <end position="720"/>
    </location>
</feature>
<feature type="transmembrane region" description="Helical; Name=S1" evidence="1">
    <location>
        <begin position="721"/>
        <end position="742"/>
    </location>
</feature>
<feature type="topological domain" description="Extracellular" evidence="15">
    <location>
        <begin position="743"/>
        <end position="751"/>
    </location>
</feature>
<feature type="transmembrane region" description="Helical; Name=S2" evidence="1">
    <location>
        <begin position="752"/>
        <end position="773"/>
    </location>
</feature>
<feature type="topological domain" description="Cytoplasmic" evidence="15">
    <location>
        <begin position="774"/>
        <end position="788"/>
    </location>
</feature>
<feature type="transmembrane region" description="Helical; Name=S3" evidence="1">
    <location>
        <begin position="789"/>
        <end position="808"/>
    </location>
</feature>
<feature type="topological domain" description="Extracellular" evidence="15">
    <location>
        <begin position="809"/>
        <end position="824"/>
    </location>
</feature>
<feature type="transmembrane region" description="Helical; Name=S4" evidence="1">
    <location>
        <begin position="825"/>
        <end position="837"/>
    </location>
</feature>
<feature type="topological domain" description="Cytoplasmic" evidence="15">
    <location>
        <begin position="838"/>
        <end position="849"/>
    </location>
</feature>
<feature type="transmembrane region" description="Helical; Name=S5" evidence="1">
    <location>
        <begin position="850"/>
        <end position="872"/>
    </location>
</feature>
<feature type="topological domain" description="Extracellular" evidence="15">
    <location>
        <begin position="873"/>
        <end position="895"/>
    </location>
</feature>
<feature type="transmembrane region" description="Helical; Name=P-helix" evidence="1">
    <location>
        <begin position="896"/>
        <end position="922"/>
    </location>
</feature>
<feature type="transmembrane region" description="Helical; Name=S6" evidence="1">
    <location>
        <begin position="923"/>
        <end position="948"/>
    </location>
</feature>
<feature type="topological domain" description="Cytoplasmic" evidence="15">
    <location>
        <begin position="949"/>
        <end position="1307"/>
    </location>
</feature>
<feature type="region of interest" description="Disordered" evidence="6">
    <location>
        <begin position="1"/>
        <end position="101"/>
    </location>
</feature>
<feature type="region of interest" description="Disordered" evidence="6">
    <location>
        <begin position="126"/>
        <end position="178"/>
    </location>
</feature>
<feature type="region of interest" description="Disordered" evidence="6">
    <location>
        <begin position="193"/>
        <end position="262"/>
    </location>
</feature>
<feature type="region of interest" description="Disordered" evidence="6">
    <location>
        <begin position="320"/>
        <end position="458"/>
    </location>
</feature>
<feature type="region of interest" description="Disordered" evidence="6">
    <location>
        <begin position="470"/>
        <end position="625"/>
    </location>
</feature>
<feature type="region of interest" description="Calmodulin-binding CaM1" evidence="2">
    <location>
        <begin position="621"/>
        <end position="631"/>
    </location>
</feature>
<feature type="region of interest" description="Disordered" evidence="6">
    <location>
        <begin position="648"/>
        <end position="681"/>
    </location>
</feature>
<feature type="region of interest" description="Ion conduction pathway" evidence="1">
    <location>
        <begin position="850"/>
        <end position="949"/>
    </location>
</feature>
<feature type="region of interest" description="C-linker" evidence="1">
    <location>
        <begin position="952"/>
        <end position="1028"/>
    </location>
</feature>
<feature type="region of interest" description="cNMP-binding domain" evidence="5">
    <location>
        <begin position="1026"/>
        <end position="1130"/>
    </location>
</feature>
<feature type="region of interest" description="Cyclic nucleotide-binding domain" evidence="1">
    <location>
        <begin position="1032"/>
        <end position="1148"/>
    </location>
</feature>
<feature type="region of interest" description="Calmodulin-binding CaM2" evidence="2">
    <location>
        <begin position="1212"/>
        <end position="1218"/>
    </location>
</feature>
<feature type="region of interest" description="Disordered" evidence="6">
    <location>
        <begin position="1214"/>
        <end position="1307"/>
    </location>
</feature>
<feature type="compositionally biased region" description="Acidic residues" evidence="6">
    <location>
        <begin position="43"/>
        <end position="59"/>
    </location>
</feature>
<feature type="compositionally biased region" description="Basic and acidic residues" evidence="6">
    <location>
        <begin position="165"/>
        <end position="174"/>
    </location>
</feature>
<feature type="compositionally biased region" description="Acidic residues" evidence="6">
    <location>
        <begin position="361"/>
        <end position="386"/>
    </location>
</feature>
<feature type="compositionally biased region" description="Basic and acidic residues" evidence="6">
    <location>
        <begin position="387"/>
        <end position="406"/>
    </location>
</feature>
<feature type="compositionally biased region" description="Acidic residues" evidence="6">
    <location>
        <begin position="407"/>
        <end position="451"/>
    </location>
</feature>
<feature type="compositionally biased region" description="Acidic residues" evidence="6">
    <location>
        <begin position="483"/>
        <end position="518"/>
    </location>
</feature>
<feature type="compositionally biased region" description="Pro residues" evidence="6">
    <location>
        <begin position="550"/>
        <end position="560"/>
    </location>
</feature>
<feature type="compositionally biased region" description="Low complexity" evidence="6">
    <location>
        <begin position="1214"/>
        <end position="1238"/>
    </location>
</feature>
<feature type="compositionally biased region" description="Pro residues" evidence="6">
    <location>
        <begin position="1250"/>
        <end position="1261"/>
    </location>
</feature>
<feature type="binding site" evidence="1">
    <location>
        <position position="1093"/>
    </location>
    <ligand>
        <name>3',5'-cyclic GMP</name>
        <dbReference type="ChEBI" id="CHEBI:57746"/>
    </ligand>
</feature>
<feature type="binding site" evidence="1">
    <location>
        <position position="1094"/>
    </location>
    <ligand>
        <name>3',5'-cyclic GMP</name>
        <dbReference type="ChEBI" id="CHEBI:57746"/>
    </ligand>
</feature>
<feature type="binding site" evidence="1">
    <location>
        <position position="1096"/>
    </location>
    <ligand>
        <name>3',5'-cyclic GMP</name>
        <dbReference type="ChEBI" id="CHEBI:57746"/>
    </ligand>
</feature>
<feature type="binding site" evidence="1">
    <location>
        <position position="1106"/>
    </location>
    <ligand>
        <name>3',5'-cyclic AMP</name>
        <dbReference type="ChEBI" id="CHEBI:58165"/>
    </ligand>
</feature>
<feature type="binding site" evidence="1">
    <location>
        <position position="1106"/>
    </location>
    <ligand>
        <name>3',5'-cyclic GMP</name>
        <dbReference type="ChEBI" id="CHEBI:57746"/>
    </ligand>
</feature>
<feature type="binding site" evidence="1">
    <location>
        <position position="1107"/>
    </location>
    <ligand>
        <name>3',5'-cyclic GMP</name>
        <dbReference type="ChEBI" id="CHEBI:57746"/>
    </ligand>
</feature>
<feature type="site" description="Central gate" evidence="1">
    <location>
        <position position="936"/>
    </location>
</feature>
<feature type="site" description="Central gate" evidence="1">
    <location>
        <position position="940"/>
    </location>
</feature>
<feature type="site" description="Occludes the pore below the central gate" evidence="1">
    <location>
        <position position="944"/>
    </location>
</feature>
<feature type="splice variant" id="VSP_062308" description="In isoform 2.">
    <original>MLGWVQRVLPQPPGTPQKTEEGAGPQPETESKPEANPQPEPEVQPEPEPEPEPAPEEAAPEVQTLPPEEPVEGEDVAEAGPSLQETQEADPPQPTSQAQVAVVKVNRPSSWMLSWFWKGMEKVVPQPVYSSSGGQNLAAGEGGPDQDGAQTLEPCGTGDPGSEDGSDKTSKTQDTEPSLWLLRWLELNLEKVLPQPPTPSQAWKVEPEGAVLEPDPPGTPMEVEPTENPSQPNPGPVEPEEEPAAEPQPGFQASSLPPPGDPVRLIEWLLHRLEMALPQPVLHGKAAEQEPSCPGTCDVQTISILPVEQAEHDLVLEDVDSCWEDTQQEDGASLQETELAPIYEDESEAMVEMPRELPQIQEEEEEEKEEKEEKEEEEEKEEEEKREEEKKKEKEEEKKEKEKEEKEEKEEKEEEEKEEKEEEEKEEKEEEEKEEKEEEEEEEEEEEEEEPIVLLDSCLVVQADVDQCQLERAQPETASIQELPEEEEEKEEEKKEEEEEKEEEEEKEEEEEKEEEGEATNST</original>
    <variation>MAKPGLNMELNRLVQDQPPGQEGPRPGPPNPAEHLPNVPSYRPATTRIPVLVSRRTALSNSNFTKEIRSSIRRL</variation>
    <location>
        <begin position="1"/>
        <end position="523"/>
    </location>
</feature>
<feature type="splice variant" id="VSP_062309" description="In isoform 4.">
    <original>SEDGSDKTSKTQDTE</original>
    <variation>KMKR</variation>
    <location>
        <begin position="162"/>
        <end position="176"/>
    </location>
</feature>
<feature type="splice variant" id="VSP_062310" description="In isoform 4.">
    <original>PPPGDPVRLIEWLLHRLEMALPQPVLHGKAAEQEPSCPGTCDVQT</original>
    <variation>LHLLQGSLKTFTWAKTQTLQANLI</variation>
    <location>
        <begin position="257"/>
        <end position="301"/>
    </location>
</feature>
<feature type="splice variant" id="VSP_062311" description="In isoform 3.">
    <original>ISILPVEQAEHDLVLEDVDSCWEDTQQEDGASLQETELAPIYEDESEAMVEMPRELPQIQEEEEEEKEEKEEKEEEEEKEEEEKREEEKKKEKEEEKKEKEKEEKEEKEEKEEEEKEEKEEEEKEEKEEEEKEEKEEEEEEEEEEEEEEPIVLLDSCLVVQADVDQCQLERAQPETASIQELPEEEEEKEEEKKEEEEEKEEEEEKEEEEEKEEEGEATNSTVPATKEHPELQVEDTDAEAGPLIPEETIPPPERPPVSPAKSDTLAVPGAATHRKKLPSQDDEAEELKALSPAESPVVAWSDPTTPQEADGEDRAASTASQNSAIINDRLQELVKMFKERTEKVKEKLIDPDVTSDEESPKPSPAKKAPDSAPAQKPAEAEAAEEEHYCDMLCCKFKRRPWKMYQFPQSIDPLTNLMYILWLFFVVLAWNWNCWLIPVRWAFPYQRADNIHLWLLMDYLCDFIYLLDITVFQMRLQFVKGGDIITDKKEMRNNYLKSQRFKMDLLCLLPLDFLYLKLGVNPLLRLPRCLKYMAFFEFNNRLEAILSKAYVYRVIRTTAYLLYSLHLNSCLYYWASAFQGIGSTHWVYDGVGNSYIRCYYWAVKTLITIGGLPDPQTLFEIVFQLLNYFTGVFAFSVMIGQMRDVVGAATAGQTYYRSCMDSTVKYMNFYKIPRSVQNRVKTWYEYTWHSQGMLDESELMVQLPDKMRLDLAIDVNYNIVSKVALFQGCDRQMIFDMLKRLRSVVYLPNDYVCKKGEIGREMYIIQAGQVQVLGGPDGKAVLVTLKAGSVFGEISLLAVGGGNRRTANVVAHGFTNLFILDKKDLNEILVHYPESQKLLRKKARRMLRNNNKPKEEKSVLILPPRAGTPKLFNAALAAAGKMGPRGAKGGKLAHLRARLKELAALEAAARQQQLLEQAKSSQEAGGEEGSGATDQPAPQEPSEPKEPPEPPAPSSPPPASAKPEGSTEEAAGPPEPSVRIRVSPGPDPGEQTLSVEMLEEKKEEVE</original>
    <variation>RATAAGGL</variation>
    <location>
        <begin position="302"/>
        <end position="1307"/>
    </location>
</feature>
<feature type="splice variant" id="VSP_062312" description="In isoform 4.">
    <original>E</original>
    <variation>EQEEENEEKEE</variation>
    <location>
        <position position="363"/>
    </location>
</feature>
<feature type="splice variant" id="VSP_062313" description="In isoform 4.">
    <original>E</original>
    <variation>EEEEKGEEEEKEEKEEKEEEEG</variation>
    <location>
        <position position="402"/>
    </location>
</feature>
<feature type="splice variant" id="VSP_062314" description="In isoform 4.">
    <original>TDKKEMRNNYLKSQRFKMDLLCLLPLDFLYLKLGVNPLLRLPRCLK</original>
    <variation>VSHRQAGGGGGGDQGRPYSQGLTD</variation>
    <location>
        <begin position="787"/>
        <end position="832"/>
    </location>
</feature>
<feature type="sequence conflict" description="In Ref. 1; CAA04152 and 2; AAC19120." evidence="15" ref="1 2">
    <original>G</original>
    <variation>S</variation>
    <location>
        <position position="571"/>
    </location>
</feature>
<feature type="mutagenesis site" description="Markedly reduces the affinity of the channel for cAMP." evidence="9">
    <original>R</original>
    <variation>E</variation>
    <location sequence="A0A8I5ZN27-2">
        <position position="657"/>
    </location>
</feature>
<dbReference type="EMBL" id="AJ000515">
    <property type="protein sequence ID" value="CAA04152.1"/>
    <property type="molecule type" value="mRNA"/>
</dbReference>
<dbReference type="EMBL" id="AF068572">
    <property type="protein sequence ID" value="AAC19120.1"/>
    <property type="molecule type" value="mRNA"/>
</dbReference>
<dbReference type="RefSeq" id="NP_001376189.1">
    <molecule id="A0A8I5ZN27-3"/>
    <property type="nucleotide sequence ID" value="NM_001389260.1"/>
</dbReference>
<dbReference type="RefSeq" id="XP_006255187.1">
    <property type="nucleotide sequence ID" value="XM_006255125.3"/>
</dbReference>
<dbReference type="RefSeq" id="XP_063134387.1">
    <molecule id="A0A8I5ZN27-2"/>
    <property type="nucleotide sequence ID" value="XM_063278317.1"/>
</dbReference>
<dbReference type="SMR" id="A0A8I5ZN27"/>
<dbReference type="FunCoup" id="A0A8I5ZN27">
    <property type="interactions" value="310"/>
</dbReference>
<dbReference type="MINT" id="A0A8I5ZN27"/>
<dbReference type="GlyGen" id="A0A8I5ZN27">
    <property type="glycosylation" value="2 sites"/>
</dbReference>
<dbReference type="PhosphoSitePlus" id="A0A8I5ZN27"/>
<dbReference type="PaxDb" id="10116-ENSRNOP00000063522"/>
<dbReference type="Ensembl" id="ENSRNOT00000060351.4">
    <molecule id="A0A8I5ZN27-4"/>
    <property type="protein sequence ID" value="ENSRNOP00000063522.4"/>
    <property type="gene ID" value="ENSRNOG00000031773.6"/>
</dbReference>
<dbReference type="Ensembl" id="ENSRNOT00000085440.2">
    <molecule id="A0A8I5ZN27-2"/>
    <property type="protein sequence ID" value="ENSRNOP00000073715.1"/>
    <property type="gene ID" value="ENSRNOG00000031773.6"/>
</dbReference>
<dbReference type="Ensembl" id="ENSRNOT00000088645.2">
    <molecule id="A0A8I5ZN27-3"/>
    <property type="protein sequence ID" value="ENSRNOP00000070248.1"/>
    <property type="gene ID" value="ENSRNOG00000031773.6"/>
</dbReference>
<dbReference type="Ensembl" id="ENSRNOT00000109711.1">
    <molecule id="A0A8I5ZN27-1"/>
    <property type="protein sequence ID" value="ENSRNOP00000079558.1"/>
    <property type="gene ID" value="ENSRNOG00000031773.6"/>
</dbReference>
<dbReference type="AGR" id="RGD:621809"/>
<dbReference type="RGD" id="621809">
    <property type="gene designation" value="Cngb1"/>
</dbReference>
<dbReference type="VEuPathDB" id="HostDB:ENSRNOG00000031773"/>
<dbReference type="eggNOG" id="KOG0499">
    <property type="taxonomic scope" value="Eukaryota"/>
</dbReference>
<dbReference type="GeneTree" id="ENSGT00940000154824"/>
<dbReference type="HOGENOM" id="CLU_005746_11_0_1"/>
<dbReference type="InParanoid" id="F1LQB8"/>
<dbReference type="OMA" id="GWVHKVL"/>
<dbReference type="OrthoDB" id="421226at2759"/>
<dbReference type="Reactome" id="R-RNO-2485179">
    <property type="pathway name" value="Activation of the phototransduction cascade"/>
</dbReference>
<dbReference type="Reactome" id="R-RNO-2514859">
    <property type="pathway name" value="Inactivation, recovery and regulation of the phototransduction cascade"/>
</dbReference>
<dbReference type="Reactome" id="R-RNO-5620916">
    <property type="pathway name" value="VxPx cargo-targeting to cilium"/>
</dbReference>
<dbReference type="Proteomes" id="UP000002494">
    <property type="component" value="Chromosome 19"/>
</dbReference>
<dbReference type="Bgee" id="ENSRNOG00000031773">
    <property type="expression patterns" value="Expressed in testis and 6 other cell types or tissues"/>
</dbReference>
<dbReference type="GO" id="GO:0017071">
    <property type="term" value="C:intracellular cyclic nucleotide activated cation channel complex"/>
    <property type="evidence" value="ECO:0000314"/>
    <property type="project" value="RGD"/>
</dbReference>
<dbReference type="GO" id="GO:0016020">
    <property type="term" value="C:membrane"/>
    <property type="evidence" value="ECO:0000266"/>
    <property type="project" value="RGD"/>
</dbReference>
<dbReference type="GO" id="GO:0098804">
    <property type="term" value="C:non-motile cilium membrane"/>
    <property type="evidence" value="ECO:0000314"/>
    <property type="project" value="UniProtKB"/>
</dbReference>
<dbReference type="GO" id="GO:0001750">
    <property type="term" value="C:photoreceptor outer segment"/>
    <property type="evidence" value="ECO:0000266"/>
    <property type="project" value="RGD"/>
</dbReference>
<dbReference type="GO" id="GO:0005886">
    <property type="term" value="C:plasma membrane"/>
    <property type="evidence" value="ECO:0000318"/>
    <property type="project" value="GO_Central"/>
</dbReference>
<dbReference type="GO" id="GO:0120200">
    <property type="term" value="C:rod photoreceptor outer segment"/>
    <property type="evidence" value="ECO:0000250"/>
    <property type="project" value="UniProtKB"/>
</dbReference>
<dbReference type="GO" id="GO:0043195">
    <property type="term" value="C:terminal bouton"/>
    <property type="evidence" value="ECO:0000314"/>
    <property type="project" value="RGD"/>
</dbReference>
<dbReference type="GO" id="GO:1902495">
    <property type="term" value="C:transmembrane transporter complex"/>
    <property type="evidence" value="ECO:0000266"/>
    <property type="project" value="RGD"/>
</dbReference>
<dbReference type="GO" id="GO:0005262">
    <property type="term" value="F:calcium channel activity"/>
    <property type="evidence" value="ECO:0007669"/>
    <property type="project" value="UniProtKB-KW"/>
</dbReference>
<dbReference type="GO" id="GO:0030552">
    <property type="term" value="F:cAMP binding"/>
    <property type="evidence" value="ECO:0000314"/>
    <property type="project" value="UniProtKB"/>
</dbReference>
<dbReference type="GO" id="GO:0030553">
    <property type="term" value="F:cGMP binding"/>
    <property type="evidence" value="ECO:0000314"/>
    <property type="project" value="UniProtKB"/>
</dbReference>
<dbReference type="GO" id="GO:0043855">
    <property type="term" value="F:cyclic nucleotide-activated monoatomic ion channel activity"/>
    <property type="evidence" value="ECO:0000266"/>
    <property type="project" value="RGD"/>
</dbReference>
<dbReference type="GO" id="GO:0005222">
    <property type="term" value="F:intracellularly cAMP-activated cation channel activity"/>
    <property type="evidence" value="ECO:0000314"/>
    <property type="project" value="UniProtKB"/>
</dbReference>
<dbReference type="GO" id="GO:0005223">
    <property type="term" value="F:intracellularly cGMP-activated cation channel activity"/>
    <property type="evidence" value="ECO:0000314"/>
    <property type="project" value="UniProtKB"/>
</dbReference>
<dbReference type="GO" id="GO:0005221">
    <property type="term" value="F:intracellularly cyclic nucleotide-activated monoatomic cation channel activity"/>
    <property type="evidence" value="ECO:0000304"/>
    <property type="project" value="RGD"/>
</dbReference>
<dbReference type="GO" id="GO:0044877">
    <property type="term" value="F:protein-containing complex binding"/>
    <property type="evidence" value="ECO:0000314"/>
    <property type="project" value="RGD"/>
</dbReference>
<dbReference type="GO" id="GO:0005272">
    <property type="term" value="F:sodium channel activity"/>
    <property type="evidence" value="ECO:0007669"/>
    <property type="project" value="UniProtKB-KW"/>
</dbReference>
<dbReference type="GO" id="GO:0006816">
    <property type="term" value="P:calcium ion transport"/>
    <property type="evidence" value="ECO:0000314"/>
    <property type="project" value="UniProtKB"/>
</dbReference>
<dbReference type="GO" id="GO:0050911">
    <property type="term" value="P:detection of chemical stimulus involved in sensory perception of smell"/>
    <property type="evidence" value="ECO:0007669"/>
    <property type="project" value="Ensembl"/>
</dbReference>
<dbReference type="GO" id="GO:0050908">
    <property type="term" value="P:detection of light stimulus involved in visual perception"/>
    <property type="evidence" value="ECO:0000266"/>
    <property type="project" value="RGD"/>
</dbReference>
<dbReference type="GO" id="GO:0051899">
    <property type="term" value="P:membrane depolarization"/>
    <property type="evidence" value="ECO:0007669"/>
    <property type="project" value="Ensembl"/>
</dbReference>
<dbReference type="GO" id="GO:0098655">
    <property type="term" value="P:monoatomic cation transmembrane transport"/>
    <property type="evidence" value="ECO:0000318"/>
    <property type="project" value="GO_Central"/>
</dbReference>
<dbReference type="GO" id="GO:0006812">
    <property type="term" value="P:monoatomic cation transport"/>
    <property type="evidence" value="ECO:0000266"/>
    <property type="project" value="RGD"/>
</dbReference>
<dbReference type="GO" id="GO:0021630">
    <property type="term" value="P:olfactory nerve maturation"/>
    <property type="evidence" value="ECO:0007669"/>
    <property type="project" value="Ensembl"/>
</dbReference>
<dbReference type="GO" id="GO:0045494">
    <property type="term" value="P:photoreceptor cell maintenance"/>
    <property type="evidence" value="ECO:0000266"/>
    <property type="project" value="RGD"/>
</dbReference>
<dbReference type="GO" id="GO:0035845">
    <property type="term" value="P:photoreceptor cell outer segment organization"/>
    <property type="evidence" value="ECO:0000266"/>
    <property type="project" value="RGD"/>
</dbReference>
<dbReference type="GO" id="GO:0007602">
    <property type="term" value="P:phototransduction"/>
    <property type="evidence" value="ECO:0000266"/>
    <property type="project" value="RGD"/>
</dbReference>
<dbReference type="GO" id="GO:0010628">
    <property type="term" value="P:positive regulation of gene expression"/>
    <property type="evidence" value="ECO:0007669"/>
    <property type="project" value="Ensembl"/>
</dbReference>
<dbReference type="GO" id="GO:0006813">
    <property type="term" value="P:potassium ion transport"/>
    <property type="evidence" value="ECO:0000314"/>
    <property type="project" value="UniProtKB"/>
</dbReference>
<dbReference type="GO" id="GO:0033365">
    <property type="term" value="P:protein localization to organelle"/>
    <property type="evidence" value="ECO:0000266"/>
    <property type="project" value="RGD"/>
</dbReference>
<dbReference type="GO" id="GO:0051480">
    <property type="term" value="P:regulation of cytosolic calcium ion concentration"/>
    <property type="evidence" value="ECO:0000314"/>
    <property type="project" value="RGD"/>
</dbReference>
<dbReference type="GO" id="GO:1990834">
    <property type="term" value="P:response to odorant"/>
    <property type="evidence" value="ECO:0007669"/>
    <property type="project" value="Ensembl"/>
</dbReference>
<dbReference type="GO" id="GO:0001895">
    <property type="term" value="P:retina homeostasis"/>
    <property type="evidence" value="ECO:0000266"/>
    <property type="project" value="RGD"/>
</dbReference>
<dbReference type="GO" id="GO:0007608">
    <property type="term" value="P:sensory perception of smell"/>
    <property type="evidence" value="ECO:0000250"/>
    <property type="project" value="UniProtKB"/>
</dbReference>
<dbReference type="GO" id="GO:0006814">
    <property type="term" value="P:sodium ion transport"/>
    <property type="evidence" value="ECO:0000314"/>
    <property type="project" value="UniProtKB"/>
</dbReference>
<dbReference type="GO" id="GO:0007601">
    <property type="term" value="P:visual perception"/>
    <property type="evidence" value="ECO:0000250"/>
    <property type="project" value="UniProtKB"/>
</dbReference>
<dbReference type="CDD" id="cd00038">
    <property type="entry name" value="CAP_ED"/>
    <property type="match status" value="1"/>
</dbReference>
<dbReference type="FunFam" id="1.10.287.70:FF:000072">
    <property type="entry name" value="Cyclic nucleotide gated channel beta 3"/>
    <property type="match status" value="1"/>
</dbReference>
<dbReference type="FunFam" id="1.10.287.630:FF:000001">
    <property type="entry name" value="Cyclic nucleotide-gated channel alpha 3"/>
    <property type="match status" value="1"/>
</dbReference>
<dbReference type="FunFam" id="2.60.120.10:FF:000020">
    <property type="entry name" value="Cyclic nucleotide-gated channel beta 3"/>
    <property type="match status" value="1"/>
</dbReference>
<dbReference type="Gene3D" id="1.10.287.70">
    <property type="match status" value="1"/>
</dbReference>
<dbReference type="Gene3D" id="1.10.287.630">
    <property type="entry name" value="Helix hairpin bin"/>
    <property type="match status" value="1"/>
</dbReference>
<dbReference type="Gene3D" id="2.60.120.10">
    <property type="entry name" value="Jelly Rolls"/>
    <property type="match status" value="1"/>
</dbReference>
<dbReference type="InterPro" id="IPR050866">
    <property type="entry name" value="CNG_cation_channel"/>
</dbReference>
<dbReference type="InterPro" id="IPR018488">
    <property type="entry name" value="cNMP-bd_CS"/>
</dbReference>
<dbReference type="InterPro" id="IPR000595">
    <property type="entry name" value="cNMP-bd_dom"/>
</dbReference>
<dbReference type="InterPro" id="IPR018490">
    <property type="entry name" value="cNMP-bd_dom_sf"/>
</dbReference>
<dbReference type="InterPro" id="IPR014710">
    <property type="entry name" value="RmlC-like_jellyroll"/>
</dbReference>
<dbReference type="PANTHER" id="PTHR45638:SF16">
    <property type="entry name" value="CYCLIC NUCLEOTIDE-GATED CATION CHANNEL BETA-1"/>
    <property type="match status" value="1"/>
</dbReference>
<dbReference type="PANTHER" id="PTHR45638">
    <property type="entry name" value="CYCLIC NUCLEOTIDE-GATED CATION CHANNEL SUBUNIT A"/>
    <property type="match status" value="1"/>
</dbReference>
<dbReference type="Pfam" id="PF00027">
    <property type="entry name" value="cNMP_binding"/>
    <property type="match status" value="1"/>
</dbReference>
<dbReference type="SMART" id="SM00100">
    <property type="entry name" value="cNMP"/>
    <property type="match status" value="1"/>
</dbReference>
<dbReference type="SUPFAM" id="SSF51206">
    <property type="entry name" value="cAMP-binding domain-like"/>
    <property type="match status" value="1"/>
</dbReference>
<dbReference type="SUPFAM" id="SSF81324">
    <property type="entry name" value="Voltage-gated potassium channels"/>
    <property type="match status" value="1"/>
</dbReference>
<dbReference type="PROSITE" id="PS00888">
    <property type="entry name" value="CNMP_BINDING_1"/>
    <property type="match status" value="1"/>
</dbReference>
<dbReference type="PROSITE" id="PS00889">
    <property type="entry name" value="CNMP_BINDING_2"/>
    <property type="match status" value="1"/>
</dbReference>
<dbReference type="PROSITE" id="PS50042">
    <property type="entry name" value="CNMP_BINDING_3"/>
    <property type="match status" value="1"/>
</dbReference>
<comment type="function">
    <text evidence="2">Pore-forming subunit of the rod cyclic nucleotide-gated channel. Mediates rod photoresponses at dim light converting transient changes in intracellular cGMP levels into electrical signals. In the dark, cGMP levels are high and keep the channel open enabling a steady inward current carried by Na(+) and Ca(2+) ions that leads to membrane depolarization and neurotransmitter release from synaptic terminals. Upon photon absorption cGMP levels decline leading to channel closure and membrane hyperpolarization that ultimately slows neurotransmitter release and signals the presence of light, the end point of the phototransduction cascade. Conducts cGMP- and cAMP-gated ion currents, with permeability for monovalent and divalent cations. The selectivity for Ca(2+) over Na(+) increases with cGMP concentrations, whereas the selectivity among monovalent ions is independent of the cGMP levels.</text>
</comment>
<comment type="function">
    <molecule>Isoform 2</molecule>
    <text evidence="7 8 9 10 11">Pore-forming subunit of the olfactory cyclic nucleotide-gated channel. Operates in the cilia of olfactory sensory neurons where chemical stimulation of the odorant is converted to an electrical signal. Mediates odorant-induced cAMP-dependent Ca(2+) influx triggering neuron depolarization. The rise of intracellular Ca(2+) levels potentiates the olfactory response by activating Ca(2+)-dependent Cl(-) channels, but it also serves as a negative feedback signal to desensitize the channel for rapid adaptation to odorants.</text>
</comment>
<comment type="catalytic activity">
    <reaction evidence="11">
        <text>Ca(2+)(in) = Ca(2+)(out)</text>
        <dbReference type="Rhea" id="RHEA:29671"/>
        <dbReference type="ChEBI" id="CHEBI:29108"/>
    </reaction>
</comment>
<comment type="catalytic activity">
    <reaction evidence="7">
        <text>Na(+)(in) = Na(+)(out)</text>
        <dbReference type="Rhea" id="RHEA:34963"/>
        <dbReference type="ChEBI" id="CHEBI:29101"/>
    </reaction>
</comment>
<comment type="catalytic activity">
    <reaction evidence="7">
        <text>K(+)(in) = K(+)(out)</text>
        <dbReference type="Rhea" id="RHEA:29463"/>
        <dbReference type="ChEBI" id="CHEBI:29103"/>
    </reaction>
</comment>
<comment type="catalytic activity">
    <reaction evidence="2">
        <text>NH4(+)(in) = NH4(+)(out)</text>
        <dbReference type="Rhea" id="RHEA:28747"/>
        <dbReference type="ChEBI" id="CHEBI:28938"/>
    </reaction>
</comment>
<comment type="catalytic activity">
    <reaction evidence="3">
        <text>Rb(+)(in) = Rb(+)(out)</text>
        <dbReference type="Rhea" id="RHEA:78547"/>
        <dbReference type="ChEBI" id="CHEBI:49847"/>
    </reaction>
</comment>
<comment type="catalytic activity">
    <reaction evidence="3">
        <text>Li(+)(in) = Li(+)(out)</text>
        <dbReference type="Rhea" id="RHEA:78551"/>
        <dbReference type="ChEBI" id="CHEBI:49713"/>
    </reaction>
</comment>
<comment type="catalytic activity">
    <reaction evidence="2">
        <text>Cs(+)(in) = Cs(+)(out)</text>
        <dbReference type="Rhea" id="RHEA:78555"/>
        <dbReference type="ChEBI" id="CHEBI:49547"/>
    </reaction>
</comment>
<comment type="subunit">
    <text evidence="2">The rod cyclic nucleotide-gated channel is a heterotetramer composed of CNGA1 and CNGB1 subunits with 3:1 stoichiometry. CNGA1:CNGB1 channel binds Ca(2+)-bound CALM1 via CaM1 and CaM2 regions of the CNGB1 subunit; this interaction modulates the affinity of the channel for cNMPs in response to intracellular Ca(2+) levels.</text>
</comment>
<comment type="subunit">
    <molecule>Isoform 2</molecule>
    <text evidence="8 9">The olfactory cyclic nucleotide-gated channel is a heterotetramer composed of CNGA2, CNGA4 and CNGB1b subunits with 2:1:1 stoichiometry.</text>
</comment>
<comment type="subcellular location">
    <molecule>Isoform 2</molecule>
    <subcellularLocation>
        <location evidence="7">Cell projection</location>
        <location evidence="7">Cilium membrane</location>
        <topology evidence="4">Multi-pass membrane protein</topology>
    </subcellularLocation>
</comment>
<comment type="alternative products">
    <event type="alternative splicing"/>
    <event type="alternative initiation"/>
    <isoform>
        <id>A0A8I5ZN27-1</id>
        <name>1</name>
        <sequence type="displayed"/>
    </isoform>
    <isoform>
        <id>A0A8I5ZN27-2</id>
        <name>2</name>
        <name evidence="12">CNGB1b</name>
        <name evidence="14">CNCb1b</name>
        <sequence type="described" ref="VSP_062308"/>
    </isoform>
    <isoform>
        <id>A0A8I5ZN27-3</id>
        <name>3</name>
        <sequence type="described" ref="VSP_062311"/>
    </isoform>
    <isoform>
        <id>A0A8I5ZN27-4</id>
        <name>4</name>
        <sequence type="described" ref="VSP_062309 VSP_062310 VSP_062312 VSP_062313 VSP_062314"/>
    </isoform>
</comment>
<comment type="tissue specificity">
    <molecule>Isoform 2</molecule>
    <text evidence="7 10">Expressed in olfactory sensory cilia (at protein level).</text>
</comment>
<comment type="similarity">
    <text evidence="15">Belongs to the cyclic nucleotide-gated cation channel (TC 1.A.1.5) family. CNGB1 subfamily.</text>
</comment>